<feature type="chain" id="PRO_1000213287" description="Phosphoribosyl-ATP pyrophosphatase">
    <location>
        <begin position="1"/>
        <end position="98"/>
    </location>
</feature>
<evidence type="ECO:0000255" key="1">
    <source>
        <dbReference type="HAMAP-Rule" id="MF_01020"/>
    </source>
</evidence>
<gene>
    <name evidence="1" type="primary">hisE</name>
    <name type="ordered locus">PTH_2530</name>
</gene>
<dbReference type="EC" id="3.6.1.31" evidence="1"/>
<dbReference type="EMBL" id="AP009389">
    <property type="protein sequence ID" value="BAF60711.1"/>
    <property type="molecule type" value="Genomic_DNA"/>
</dbReference>
<dbReference type="SMR" id="A5CZ71"/>
<dbReference type="STRING" id="370438.PTH_2530"/>
<dbReference type="KEGG" id="pth:PTH_2530"/>
<dbReference type="eggNOG" id="COG0140">
    <property type="taxonomic scope" value="Bacteria"/>
</dbReference>
<dbReference type="HOGENOM" id="CLU_123337_0_0_9"/>
<dbReference type="UniPathway" id="UPA00031">
    <property type="reaction ID" value="UER00007"/>
</dbReference>
<dbReference type="Proteomes" id="UP000006556">
    <property type="component" value="Chromosome"/>
</dbReference>
<dbReference type="GO" id="GO:0005737">
    <property type="term" value="C:cytoplasm"/>
    <property type="evidence" value="ECO:0007669"/>
    <property type="project" value="UniProtKB-SubCell"/>
</dbReference>
<dbReference type="GO" id="GO:0005524">
    <property type="term" value="F:ATP binding"/>
    <property type="evidence" value="ECO:0007669"/>
    <property type="project" value="UniProtKB-KW"/>
</dbReference>
<dbReference type="GO" id="GO:0004636">
    <property type="term" value="F:phosphoribosyl-ATP diphosphatase activity"/>
    <property type="evidence" value="ECO:0007669"/>
    <property type="project" value="UniProtKB-UniRule"/>
</dbReference>
<dbReference type="GO" id="GO:0000105">
    <property type="term" value="P:L-histidine biosynthetic process"/>
    <property type="evidence" value="ECO:0007669"/>
    <property type="project" value="UniProtKB-UniRule"/>
</dbReference>
<dbReference type="CDD" id="cd11534">
    <property type="entry name" value="NTP-PPase_HisIE_like"/>
    <property type="match status" value="1"/>
</dbReference>
<dbReference type="Gene3D" id="1.10.287.1080">
    <property type="entry name" value="MazG-like"/>
    <property type="match status" value="1"/>
</dbReference>
<dbReference type="HAMAP" id="MF_01020">
    <property type="entry name" value="HisE"/>
    <property type="match status" value="1"/>
</dbReference>
<dbReference type="InterPro" id="IPR008179">
    <property type="entry name" value="HisE"/>
</dbReference>
<dbReference type="InterPro" id="IPR021130">
    <property type="entry name" value="PRib-ATP_PPHydrolase-like"/>
</dbReference>
<dbReference type="NCBIfam" id="TIGR03188">
    <property type="entry name" value="histidine_hisI"/>
    <property type="match status" value="1"/>
</dbReference>
<dbReference type="NCBIfam" id="NF001611">
    <property type="entry name" value="PRK00400.1-3"/>
    <property type="match status" value="1"/>
</dbReference>
<dbReference type="PANTHER" id="PTHR42945">
    <property type="entry name" value="HISTIDINE BIOSYNTHESIS BIFUNCTIONAL PROTEIN"/>
    <property type="match status" value="1"/>
</dbReference>
<dbReference type="PANTHER" id="PTHR42945:SF9">
    <property type="entry name" value="HISTIDINE BIOSYNTHESIS BIFUNCTIONAL PROTEIN HISIE"/>
    <property type="match status" value="1"/>
</dbReference>
<dbReference type="Pfam" id="PF01503">
    <property type="entry name" value="PRA-PH"/>
    <property type="match status" value="1"/>
</dbReference>
<dbReference type="SUPFAM" id="SSF101386">
    <property type="entry name" value="all-alpha NTP pyrophosphatases"/>
    <property type="match status" value="1"/>
</dbReference>
<sequence>MGEKDIIRDLYEVILDRRQKQPDGSYTAYLFEQGEDKILKKIGEEAAEVLIAAKNGGGAALVGEMADLVYHLLVLLAWHGLAPEDVLAELAARRQKKS</sequence>
<name>HIS2_PELTS</name>
<protein>
    <recommendedName>
        <fullName evidence="1">Phosphoribosyl-ATP pyrophosphatase</fullName>
        <shortName evidence="1">PRA-PH</shortName>
        <ecNumber evidence="1">3.6.1.31</ecNumber>
    </recommendedName>
</protein>
<keyword id="KW-0028">Amino-acid biosynthesis</keyword>
<keyword id="KW-0067">ATP-binding</keyword>
<keyword id="KW-0963">Cytoplasm</keyword>
<keyword id="KW-0368">Histidine biosynthesis</keyword>
<keyword id="KW-0378">Hydrolase</keyword>
<keyword id="KW-0547">Nucleotide-binding</keyword>
<keyword id="KW-1185">Reference proteome</keyword>
<accession>A5CZ71</accession>
<reference key="1">
    <citation type="journal article" date="2008" name="Genome Res.">
        <title>The genome of Pelotomaculum thermopropionicum reveals niche-associated evolution in anaerobic microbiota.</title>
        <authorList>
            <person name="Kosaka T."/>
            <person name="Kato S."/>
            <person name="Shimoyama T."/>
            <person name="Ishii S."/>
            <person name="Abe T."/>
            <person name="Watanabe K."/>
        </authorList>
    </citation>
    <scope>NUCLEOTIDE SEQUENCE [LARGE SCALE GENOMIC DNA]</scope>
    <source>
        <strain>DSM 13744 / JCM 10971 / SI</strain>
    </source>
</reference>
<proteinExistence type="inferred from homology"/>
<organism>
    <name type="scientific">Pelotomaculum thermopropionicum (strain DSM 13744 / JCM 10971 / SI)</name>
    <dbReference type="NCBI Taxonomy" id="370438"/>
    <lineage>
        <taxon>Bacteria</taxon>
        <taxon>Bacillati</taxon>
        <taxon>Bacillota</taxon>
        <taxon>Clostridia</taxon>
        <taxon>Eubacteriales</taxon>
        <taxon>Desulfotomaculaceae</taxon>
        <taxon>Pelotomaculum</taxon>
    </lineage>
</organism>
<comment type="catalytic activity">
    <reaction evidence="1">
        <text>1-(5-phospho-beta-D-ribosyl)-ATP + H2O = 1-(5-phospho-beta-D-ribosyl)-5'-AMP + diphosphate + H(+)</text>
        <dbReference type="Rhea" id="RHEA:22828"/>
        <dbReference type="ChEBI" id="CHEBI:15377"/>
        <dbReference type="ChEBI" id="CHEBI:15378"/>
        <dbReference type="ChEBI" id="CHEBI:33019"/>
        <dbReference type="ChEBI" id="CHEBI:59457"/>
        <dbReference type="ChEBI" id="CHEBI:73183"/>
        <dbReference type="EC" id="3.6.1.31"/>
    </reaction>
</comment>
<comment type="pathway">
    <text evidence="1">Amino-acid biosynthesis; L-histidine biosynthesis; L-histidine from 5-phospho-alpha-D-ribose 1-diphosphate: step 2/9.</text>
</comment>
<comment type="subcellular location">
    <subcellularLocation>
        <location evidence="1">Cytoplasm</location>
    </subcellularLocation>
</comment>
<comment type="similarity">
    <text evidence="1">Belongs to the PRA-PH family.</text>
</comment>